<dbReference type="EC" id="2.5.1.19" evidence="1"/>
<dbReference type="EMBL" id="BX571856">
    <property type="protein sequence ID" value="CAG40473.1"/>
    <property type="molecule type" value="Genomic_DNA"/>
</dbReference>
<dbReference type="RefSeq" id="WP_000245891.1">
    <property type="nucleotide sequence ID" value="NC_002952.2"/>
</dbReference>
<dbReference type="SMR" id="Q6GGU5"/>
<dbReference type="KEGG" id="sar:SAR1475"/>
<dbReference type="HOGENOM" id="CLU_024321_0_1_9"/>
<dbReference type="UniPathway" id="UPA00053">
    <property type="reaction ID" value="UER00089"/>
</dbReference>
<dbReference type="Proteomes" id="UP000000596">
    <property type="component" value="Chromosome"/>
</dbReference>
<dbReference type="GO" id="GO:0005737">
    <property type="term" value="C:cytoplasm"/>
    <property type="evidence" value="ECO:0007669"/>
    <property type="project" value="UniProtKB-SubCell"/>
</dbReference>
<dbReference type="GO" id="GO:0003866">
    <property type="term" value="F:3-phosphoshikimate 1-carboxyvinyltransferase activity"/>
    <property type="evidence" value="ECO:0007669"/>
    <property type="project" value="UniProtKB-UniRule"/>
</dbReference>
<dbReference type="GO" id="GO:0008652">
    <property type="term" value="P:amino acid biosynthetic process"/>
    <property type="evidence" value="ECO:0007669"/>
    <property type="project" value="UniProtKB-KW"/>
</dbReference>
<dbReference type="GO" id="GO:0009073">
    <property type="term" value="P:aromatic amino acid family biosynthetic process"/>
    <property type="evidence" value="ECO:0007669"/>
    <property type="project" value="UniProtKB-KW"/>
</dbReference>
<dbReference type="GO" id="GO:0009423">
    <property type="term" value="P:chorismate biosynthetic process"/>
    <property type="evidence" value="ECO:0007669"/>
    <property type="project" value="UniProtKB-UniRule"/>
</dbReference>
<dbReference type="CDD" id="cd01556">
    <property type="entry name" value="EPSP_synthase"/>
    <property type="match status" value="1"/>
</dbReference>
<dbReference type="FunFam" id="3.65.10.10:FF:000005">
    <property type="entry name" value="3-phosphoshikimate 1-carboxyvinyltransferase"/>
    <property type="match status" value="1"/>
</dbReference>
<dbReference type="FunFam" id="3.65.10.10:FF:000006">
    <property type="entry name" value="3-phosphoshikimate 1-carboxyvinyltransferase"/>
    <property type="match status" value="1"/>
</dbReference>
<dbReference type="Gene3D" id="3.65.10.10">
    <property type="entry name" value="Enolpyruvate transferase domain"/>
    <property type="match status" value="2"/>
</dbReference>
<dbReference type="HAMAP" id="MF_00210">
    <property type="entry name" value="EPSP_synth"/>
    <property type="match status" value="1"/>
</dbReference>
<dbReference type="InterPro" id="IPR001986">
    <property type="entry name" value="Enolpyruvate_Tfrase_dom"/>
</dbReference>
<dbReference type="InterPro" id="IPR036968">
    <property type="entry name" value="Enolpyruvate_Tfrase_sf"/>
</dbReference>
<dbReference type="InterPro" id="IPR006264">
    <property type="entry name" value="EPSP_synthase"/>
</dbReference>
<dbReference type="InterPro" id="IPR023193">
    <property type="entry name" value="EPSP_synthase_CS"/>
</dbReference>
<dbReference type="InterPro" id="IPR013792">
    <property type="entry name" value="RNA3'P_cycl/enolpyr_Trfase_a/b"/>
</dbReference>
<dbReference type="NCBIfam" id="TIGR01356">
    <property type="entry name" value="aroA"/>
    <property type="match status" value="1"/>
</dbReference>
<dbReference type="PANTHER" id="PTHR21090">
    <property type="entry name" value="AROM/DEHYDROQUINATE SYNTHASE"/>
    <property type="match status" value="1"/>
</dbReference>
<dbReference type="PANTHER" id="PTHR21090:SF5">
    <property type="entry name" value="PENTAFUNCTIONAL AROM POLYPEPTIDE"/>
    <property type="match status" value="1"/>
</dbReference>
<dbReference type="Pfam" id="PF00275">
    <property type="entry name" value="EPSP_synthase"/>
    <property type="match status" value="1"/>
</dbReference>
<dbReference type="PIRSF" id="PIRSF000505">
    <property type="entry name" value="EPSPS"/>
    <property type="match status" value="1"/>
</dbReference>
<dbReference type="SUPFAM" id="SSF55205">
    <property type="entry name" value="EPT/RTPC-like"/>
    <property type="match status" value="1"/>
</dbReference>
<dbReference type="PROSITE" id="PS00104">
    <property type="entry name" value="EPSP_SYNTHASE_1"/>
    <property type="match status" value="1"/>
</dbReference>
<dbReference type="PROSITE" id="PS00885">
    <property type="entry name" value="EPSP_SYNTHASE_2"/>
    <property type="match status" value="1"/>
</dbReference>
<proteinExistence type="inferred from homology"/>
<comment type="function">
    <text evidence="1">Catalyzes the transfer of the enolpyruvyl moiety of phosphoenolpyruvate (PEP) to the 5-hydroxyl of shikimate-3-phosphate (S3P) to produce enolpyruvyl shikimate-3-phosphate and inorganic phosphate.</text>
</comment>
<comment type="catalytic activity">
    <reaction evidence="1">
        <text>3-phosphoshikimate + phosphoenolpyruvate = 5-O-(1-carboxyvinyl)-3-phosphoshikimate + phosphate</text>
        <dbReference type="Rhea" id="RHEA:21256"/>
        <dbReference type="ChEBI" id="CHEBI:43474"/>
        <dbReference type="ChEBI" id="CHEBI:57701"/>
        <dbReference type="ChEBI" id="CHEBI:58702"/>
        <dbReference type="ChEBI" id="CHEBI:145989"/>
        <dbReference type="EC" id="2.5.1.19"/>
    </reaction>
    <physiologicalReaction direction="left-to-right" evidence="1">
        <dbReference type="Rhea" id="RHEA:21257"/>
    </physiologicalReaction>
</comment>
<comment type="pathway">
    <text evidence="1">Metabolic intermediate biosynthesis; chorismate biosynthesis; chorismate from D-erythrose 4-phosphate and phosphoenolpyruvate: step 6/7.</text>
</comment>
<comment type="subunit">
    <text evidence="1">Monomer.</text>
</comment>
<comment type="subcellular location">
    <subcellularLocation>
        <location evidence="1">Cytoplasm</location>
    </subcellularLocation>
</comment>
<comment type="similarity">
    <text evidence="1">Belongs to the EPSP synthase family.</text>
</comment>
<reference key="1">
    <citation type="journal article" date="2004" name="Proc. Natl. Acad. Sci. U.S.A.">
        <title>Complete genomes of two clinical Staphylococcus aureus strains: evidence for the rapid evolution of virulence and drug resistance.</title>
        <authorList>
            <person name="Holden M.T.G."/>
            <person name="Feil E.J."/>
            <person name="Lindsay J.A."/>
            <person name="Peacock S.J."/>
            <person name="Day N.P.J."/>
            <person name="Enright M.C."/>
            <person name="Foster T.J."/>
            <person name="Moore C.E."/>
            <person name="Hurst L."/>
            <person name="Atkin R."/>
            <person name="Barron A."/>
            <person name="Bason N."/>
            <person name="Bentley S.D."/>
            <person name="Chillingworth C."/>
            <person name="Chillingworth T."/>
            <person name="Churcher C."/>
            <person name="Clark L."/>
            <person name="Corton C."/>
            <person name="Cronin A."/>
            <person name="Doggett J."/>
            <person name="Dowd L."/>
            <person name="Feltwell T."/>
            <person name="Hance Z."/>
            <person name="Harris B."/>
            <person name="Hauser H."/>
            <person name="Holroyd S."/>
            <person name="Jagels K."/>
            <person name="James K.D."/>
            <person name="Lennard N."/>
            <person name="Line A."/>
            <person name="Mayes R."/>
            <person name="Moule S."/>
            <person name="Mungall K."/>
            <person name="Ormond D."/>
            <person name="Quail M.A."/>
            <person name="Rabbinowitsch E."/>
            <person name="Rutherford K.M."/>
            <person name="Sanders M."/>
            <person name="Sharp S."/>
            <person name="Simmonds M."/>
            <person name="Stevens K."/>
            <person name="Whitehead S."/>
            <person name="Barrell B.G."/>
            <person name="Spratt B.G."/>
            <person name="Parkhill J."/>
        </authorList>
    </citation>
    <scope>NUCLEOTIDE SEQUENCE [LARGE SCALE GENOMIC DNA]</scope>
    <source>
        <strain>MRSA252</strain>
    </source>
</reference>
<feature type="chain" id="PRO_0000088293" description="3-phosphoshikimate 1-carboxyvinyltransferase">
    <location>
        <begin position="1"/>
        <end position="432"/>
    </location>
</feature>
<feature type="active site" description="Proton acceptor" evidence="1">
    <location>
        <position position="317"/>
    </location>
</feature>
<feature type="binding site" evidence="1">
    <location>
        <position position="23"/>
    </location>
    <ligand>
        <name>3-phosphoshikimate</name>
        <dbReference type="ChEBI" id="CHEBI:145989"/>
    </ligand>
</feature>
<feature type="binding site" evidence="1">
    <location>
        <position position="23"/>
    </location>
    <ligand>
        <name>phosphoenolpyruvate</name>
        <dbReference type="ChEBI" id="CHEBI:58702"/>
    </ligand>
</feature>
<feature type="binding site" evidence="1">
    <location>
        <position position="24"/>
    </location>
    <ligand>
        <name>3-phosphoshikimate</name>
        <dbReference type="ChEBI" id="CHEBI:145989"/>
    </ligand>
</feature>
<feature type="binding site" evidence="1">
    <location>
        <position position="28"/>
    </location>
    <ligand>
        <name>3-phosphoshikimate</name>
        <dbReference type="ChEBI" id="CHEBI:145989"/>
    </ligand>
</feature>
<feature type="binding site" evidence="1">
    <location>
        <position position="95"/>
    </location>
    <ligand>
        <name>phosphoenolpyruvate</name>
        <dbReference type="ChEBI" id="CHEBI:58702"/>
    </ligand>
</feature>
<feature type="binding site" evidence="1">
    <location>
        <position position="123"/>
    </location>
    <ligand>
        <name>phosphoenolpyruvate</name>
        <dbReference type="ChEBI" id="CHEBI:58702"/>
    </ligand>
</feature>
<feature type="binding site" evidence="1">
    <location>
        <position position="167"/>
    </location>
    <ligand>
        <name>3-phosphoshikimate</name>
        <dbReference type="ChEBI" id="CHEBI:145989"/>
    </ligand>
</feature>
<feature type="binding site" evidence="1">
    <location>
        <position position="169"/>
    </location>
    <ligand>
        <name>3-phosphoshikimate</name>
        <dbReference type="ChEBI" id="CHEBI:145989"/>
    </ligand>
</feature>
<feature type="binding site" evidence="1">
    <location>
        <position position="169"/>
    </location>
    <ligand>
        <name>phosphoenolpyruvate</name>
        <dbReference type="ChEBI" id="CHEBI:58702"/>
    </ligand>
</feature>
<feature type="binding site" evidence="1">
    <location>
        <position position="317"/>
    </location>
    <ligand>
        <name>3-phosphoshikimate</name>
        <dbReference type="ChEBI" id="CHEBI:145989"/>
    </ligand>
</feature>
<feature type="binding site" evidence="1">
    <location>
        <position position="344"/>
    </location>
    <ligand>
        <name>3-phosphoshikimate</name>
        <dbReference type="ChEBI" id="CHEBI:145989"/>
    </ligand>
</feature>
<feature type="binding site" evidence="1">
    <location>
        <position position="348"/>
    </location>
    <ligand>
        <name>phosphoenolpyruvate</name>
        <dbReference type="ChEBI" id="CHEBI:58702"/>
    </ligand>
</feature>
<feature type="binding site" evidence="1">
    <location>
        <position position="390"/>
    </location>
    <ligand>
        <name>phosphoenolpyruvate</name>
        <dbReference type="ChEBI" id="CHEBI:58702"/>
    </ligand>
</feature>
<sequence length="432" mass="47001">MVNEQIIDISGPLKGEIEVPGDKSMTHRAIMLASLAEGVSTIYKPLLGEDCRRTMDIFRLLGVDIKEDEDKLVVNSPGYKAFKTPHQVLYTGNSGTTTRLLAGLLSGLGIESVLSGDVSIGKRPMDRVLRPLKSMNANIEGIEDNYTPLIIKPSVIKGINYKMEVASAQVKSAILFASLFSKEATIIKELDVSRNHTETMFRHFNIPIEAEGLSITTIPEAIRYIKPADFHVPGDISSAAFFIVAALITPGSDVTIHNVGINPTRSGIIDIVEKMGGNIQLFNQTTGAEPTASIRIQYTPMLQPIKIEGELVPKAIDELPVIALLCTQAVGTSTIKDAEELKVKETNRIDTTADMLNLLGFELQPTNDGLIIHPSEFKTNATVDSLTDHRIGMMLAVASLLSSEPVKIKQFDAVNVSFPGFLPKLKLLENEG</sequence>
<evidence type="ECO:0000255" key="1">
    <source>
        <dbReference type="HAMAP-Rule" id="MF_00210"/>
    </source>
</evidence>
<protein>
    <recommendedName>
        <fullName evidence="1">3-phosphoshikimate 1-carboxyvinyltransferase</fullName>
        <ecNumber evidence="1">2.5.1.19</ecNumber>
    </recommendedName>
    <alternativeName>
        <fullName evidence="1">5-enolpyruvylshikimate-3-phosphate synthase</fullName>
        <shortName evidence="1">EPSP synthase</shortName>
        <shortName evidence="1">EPSPS</shortName>
    </alternativeName>
</protein>
<keyword id="KW-0028">Amino-acid biosynthesis</keyword>
<keyword id="KW-0057">Aromatic amino acid biosynthesis</keyword>
<keyword id="KW-0963">Cytoplasm</keyword>
<keyword id="KW-0808">Transferase</keyword>
<gene>
    <name evidence="1" type="primary">aroA</name>
    <name type="ordered locus">SAR1475</name>
</gene>
<name>AROA_STAAR</name>
<organism>
    <name type="scientific">Staphylococcus aureus (strain MRSA252)</name>
    <dbReference type="NCBI Taxonomy" id="282458"/>
    <lineage>
        <taxon>Bacteria</taxon>
        <taxon>Bacillati</taxon>
        <taxon>Bacillota</taxon>
        <taxon>Bacilli</taxon>
        <taxon>Bacillales</taxon>
        <taxon>Staphylococcaceae</taxon>
        <taxon>Staphylococcus</taxon>
    </lineage>
</organism>
<accession>Q6GGU5</accession>